<proteinExistence type="evidence at protein level"/>
<comment type="function">
    <text evidence="1">Acts as a positive regulator of ERK phosphorylation downstream of fibroblast growth factor-receptor activation. Involved in the regulation of both caspase-dependent apoptosis and caspase-independent cell death. In the skin, it plays a predominant role in suppressing caspase-dependent apoptosis in response to UV stress in a range of dermal cell types.</text>
</comment>
<comment type="catalytic activity">
    <reaction>
        <text>L-seryl-[protein] + ATP = O-phospho-L-seryl-[protein] + ADP + H(+)</text>
        <dbReference type="Rhea" id="RHEA:17989"/>
        <dbReference type="Rhea" id="RHEA-COMP:9863"/>
        <dbReference type="Rhea" id="RHEA-COMP:11604"/>
        <dbReference type="ChEBI" id="CHEBI:15378"/>
        <dbReference type="ChEBI" id="CHEBI:29999"/>
        <dbReference type="ChEBI" id="CHEBI:30616"/>
        <dbReference type="ChEBI" id="CHEBI:83421"/>
        <dbReference type="ChEBI" id="CHEBI:456216"/>
        <dbReference type="EC" id="2.7.12.1"/>
    </reaction>
</comment>
<comment type="catalytic activity">
    <reaction>
        <text>L-threonyl-[protein] + ATP = O-phospho-L-threonyl-[protein] + ADP + H(+)</text>
        <dbReference type="Rhea" id="RHEA:46608"/>
        <dbReference type="Rhea" id="RHEA-COMP:11060"/>
        <dbReference type="Rhea" id="RHEA-COMP:11605"/>
        <dbReference type="ChEBI" id="CHEBI:15378"/>
        <dbReference type="ChEBI" id="CHEBI:30013"/>
        <dbReference type="ChEBI" id="CHEBI:30616"/>
        <dbReference type="ChEBI" id="CHEBI:61977"/>
        <dbReference type="ChEBI" id="CHEBI:456216"/>
        <dbReference type="EC" id="2.7.12.1"/>
    </reaction>
</comment>
<comment type="catalytic activity">
    <reaction>
        <text>L-tyrosyl-[protein] + ATP = O-phospho-L-tyrosyl-[protein] + ADP + H(+)</text>
        <dbReference type="Rhea" id="RHEA:10596"/>
        <dbReference type="Rhea" id="RHEA-COMP:10136"/>
        <dbReference type="Rhea" id="RHEA-COMP:20101"/>
        <dbReference type="ChEBI" id="CHEBI:15378"/>
        <dbReference type="ChEBI" id="CHEBI:30616"/>
        <dbReference type="ChEBI" id="CHEBI:46858"/>
        <dbReference type="ChEBI" id="CHEBI:61978"/>
        <dbReference type="ChEBI" id="CHEBI:456216"/>
        <dbReference type="EC" id="2.7.12.1"/>
    </reaction>
</comment>
<comment type="subcellular location">
    <subcellularLocation>
        <location evidence="7">Cytoplasm</location>
    </subcellularLocation>
    <subcellularLocation>
        <location evidence="7">Cell membrane</location>
    </subcellularLocation>
    <subcellularLocation>
        <location evidence="7">Apical cell membrane</location>
    </subcellularLocation>
    <subcellularLocation>
        <location evidence="7">Basolateral cell membrane</location>
    </subcellularLocation>
    <subcellularLocation>
        <location evidence="7">Cell junction</location>
    </subcellularLocation>
    <text evidence="7">Detected in basolateral and apical membranes of all tubular epithelia. Detected at apical cell-cell junctions. Colocalized with FGF receptors to the cell membrane.</text>
</comment>
<comment type="alternative products">
    <event type="alternative splicing"/>
    <isoform>
        <id>Q6XUX1-1</id>
        <name>1</name>
        <sequence type="displayed"/>
    </isoform>
    <isoform>
        <id>Q6XUX1-2</id>
        <name>2</name>
        <sequence type="described" ref="VSP_018035"/>
    </isoform>
    <isoform>
        <id>Q6XUX1-3</id>
        <name>3</name>
        <sequence type="described" ref="VSP_018036"/>
    </isoform>
    <isoform>
        <id>Q6XUX1-4</id>
        <name>4</name>
        <sequence type="described" ref="VSP_018037 VSP_018038 VSP_018039"/>
    </isoform>
</comment>
<comment type="tissue specificity">
    <text evidence="6 7">Expressed in brain, heart, skeletal muscle, kidney and lung. Expressed in maturing tubular epithelia, with the most prominent expression in the medulla and the papilla. Expressed in thin ascending limb of the loop of Henle and the distal convoluted tubule. Expressed in all layers of transitional ureteric epithelium and in the ureteric smooth-muscle cells (at protein level). Widely expressed. Highly expressed in many brain regions, including in cerebellum, olfactory, hippocampus and cerebral cortex.</text>
</comment>
<comment type="developmental stage">
    <text evidence="6">At 14.5 dpc detected in lung and skeletal muscle, and by 18.5 dpc detected in skin, whisker, gut and testis.</text>
</comment>
<comment type="similarity">
    <text evidence="3">Belongs to the protein kinase superfamily. Ser/Thr protein kinase family.</text>
</comment>
<comment type="sequence caution" evidence="9">
    <conflict type="erroneous initiation">
        <sequence resource="EMBL-CDS" id="BAC34316"/>
    </conflict>
</comment>
<comment type="sequence caution" evidence="9">
    <conflict type="erroneous initiation">
        <sequence resource="EMBL-CDS" id="BAE26444"/>
    </conflict>
</comment>
<evidence type="ECO:0000250" key="1">
    <source>
        <dbReference type="UniProtKB" id="Q6XUX3"/>
    </source>
</evidence>
<evidence type="ECO:0000255" key="2"/>
<evidence type="ECO:0000255" key="3">
    <source>
        <dbReference type="PROSITE-ProRule" id="PRU00159"/>
    </source>
</evidence>
<evidence type="ECO:0000255" key="4">
    <source>
        <dbReference type="PROSITE-ProRule" id="PRU10027"/>
    </source>
</evidence>
<evidence type="ECO:0000256" key="5">
    <source>
        <dbReference type="SAM" id="MobiDB-lite"/>
    </source>
</evidence>
<evidence type="ECO:0000269" key="6">
    <source>
    </source>
</evidence>
<evidence type="ECO:0000269" key="7">
    <source>
    </source>
</evidence>
<evidence type="ECO:0000303" key="8">
    <source>
    </source>
</evidence>
<evidence type="ECO:0000305" key="9"/>
<accession>Q6XUX1</accession>
<accession>Q3ULK4</accession>
<accession>Q5EBN5</accession>
<accession>Q8C7D4</accession>
<accession>Q8C923</accession>
<accession>Q9CTP7</accession>
<reference key="1">
    <citation type="journal article" date="2006" name="Biochim. Biophys. Acta">
        <title>Dusty protein kinases: primary structure, gene evolution, tissue specific expression and unique features of the catalytic domain.</title>
        <authorList>
            <person name="Peng J."/>
            <person name="Dong W."/>
            <person name="Chen Y."/>
            <person name="Mo R."/>
            <person name="Cheng J.-F."/>
            <person name="Hui C.-C."/>
            <person name="Mohandas N."/>
            <person name="Huang C.-H."/>
        </authorList>
    </citation>
    <scope>NUCLEOTIDE SEQUENCE [MRNA] (ISOFORM 1)</scope>
    <scope>TISSUE SPECIFICITY</scope>
    <scope>DEVELOPMENTAL STAGE</scope>
    <source>
        <strain>BALB/cJ</strain>
        <tissue>Brain</tissue>
    </source>
</reference>
<reference key="2">
    <citation type="journal article" date="2005" name="Science">
        <title>The transcriptional landscape of the mammalian genome.</title>
        <authorList>
            <person name="Carninci P."/>
            <person name="Kasukawa T."/>
            <person name="Katayama S."/>
            <person name="Gough J."/>
            <person name="Frith M.C."/>
            <person name="Maeda N."/>
            <person name="Oyama R."/>
            <person name="Ravasi T."/>
            <person name="Lenhard B."/>
            <person name="Wells C."/>
            <person name="Kodzius R."/>
            <person name="Shimokawa K."/>
            <person name="Bajic V.B."/>
            <person name="Brenner S.E."/>
            <person name="Batalov S."/>
            <person name="Forrest A.R."/>
            <person name="Zavolan M."/>
            <person name="Davis M.J."/>
            <person name="Wilming L.G."/>
            <person name="Aidinis V."/>
            <person name="Allen J.E."/>
            <person name="Ambesi-Impiombato A."/>
            <person name="Apweiler R."/>
            <person name="Aturaliya R.N."/>
            <person name="Bailey T.L."/>
            <person name="Bansal M."/>
            <person name="Baxter L."/>
            <person name="Beisel K.W."/>
            <person name="Bersano T."/>
            <person name="Bono H."/>
            <person name="Chalk A.M."/>
            <person name="Chiu K.P."/>
            <person name="Choudhary V."/>
            <person name="Christoffels A."/>
            <person name="Clutterbuck D.R."/>
            <person name="Crowe M.L."/>
            <person name="Dalla E."/>
            <person name="Dalrymple B.P."/>
            <person name="de Bono B."/>
            <person name="Della Gatta G."/>
            <person name="di Bernardo D."/>
            <person name="Down T."/>
            <person name="Engstrom P."/>
            <person name="Fagiolini M."/>
            <person name="Faulkner G."/>
            <person name="Fletcher C.F."/>
            <person name="Fukushima T."/>
            <person name="Furuno M."/>
            <person name="Futaki S."/>
            <person name="Gariboldi M."/>
            <person name="Georgii-Hemming P."/>
            <person name="Gingeras T.R."/>
            <person name="Gojobori T."/>
            <person name="Green R.E."/>
            <person name="Gustincich S."/>
            <person name="Harbers M."/>
            <person name="Hayashi Y."/>
            <person name="Hensch T.K."/>
            <person name="Hirokawa N."/>
            <person name="Hill D."/>
            <person name="Huminiecki L."/>
            <person name="Iacono M."/>
            <person name="Ikeo K."/>
            <person name="Iwama A."/>
            <person name="Ishikawa T."/>
            <person name="Jakt M."/>
            <person name="Kanapin A."/>
            <person name="Katoh M."/>
            <person name="Kawasawa Y."/>
            <person name="Kelso J."/>
            <person name="Kitamura H."/>
            <person name="Kitano H."/>
            <person name="Kollias G."/>
            <person name="Krishnan S.P."/>
            <person name="Kruger A."/>
            <person name="Kummerfeld S.K."/>
            <person name="Kurochkin I.V."/>
            <person name="Lareau L.F."/>
            <person name="Lazarevic D."/>
            <person name="Lipovich L."/>
            <person name="Liu J."/>
            <person name="Liuni S."/>
            <person name="McWilliam S."/>
            <person name="Madan Babu M."/>
            <person name="Madera M."/>
            <person name="Marchionni L."/>
            <person name="Matsuda H."/>
            <person name="Matsuzawa S."/>
            <person name="Miki H."/>
            <person name="Mignone F."/>
            <person name="Miyake S."/>
            <person name="Morris K."/>
            <person name="Mottagui-Tabar S."/>
            <person name="Mulder N."/>
            <person name="Nakano N."/>
            <person name="Nakauchi H."/>
            <person name="Ng P."/>
            <person name="Nilsson R."/>
            <person name="Nishiguchi S."/>
            <person name="Nishikawa S."/>
            <person name="Nori F."/>
            <person name="Ohara O."/>
            <person name="Okazaki Y."/>
            <person name="Orlando V."/>
            <person name="Pang K.C."/>
            <person name="Pavan W.J."/>
            <person name="Pavesi G."/>
            <person name="Pesole G."/>
            <person name="Petrovsky N."/>
            <person name="Piazza S."/>
            <person name="Reed J."/>
            <person name="Reid J.F."/>
            <person name="Ring B.Z."/>
            <person name="Ringwald M."/>
            <person name="Rost B."/>
            <person name="Ruan Y."/>
            <person name="Salzberg S.L."/>
            <person name="Sandelin A."/>
            <person name="Schneider C."/>
            <person name="Schoenbach C."/>
            <person name="Sekiguchi K."/>
            <person name="Semple C.A."/>
            <person name="Seno S."/>
            <person name="Sessa L."/>
            <person name="Sheng Y."/>
            <person name="Shibata Y."/>
            <person name="Shimada H."/>
            <person name="Shimada K."/>
            <person name="Silva D."/>
            <person name="Sinclair B."/>
            <person name="Sperling S."/>
            <person name="Stupka E."/>
            <person name="Sugiura K."/>
            <person name="Sultana R."/>
            <person name="Takenaka Y."/>
            <person name="Taki K."/>
            <person name="Tammoja K."/>
            <person name="Tan S.L."/>
            <person name="Tang S."/>
            <person name="Taylor M.S."/>
            <person name="Tegner J."/>
            <person name="Teichmann S.A."/>
            <person name="Ueda H.R."/>
            <person name="van Nimwegen E."/>
            <person name="Verardo R."/>
            <person name="Wei C.L."/>
            <person name="Yagi K."/>
            <person name="Yamanishi H."/>
            <person name="Zabarovsky E."/>
            <person name="Zhu S."/>
            <person name="Zimmer A."/>
            <person name="Hide W."/>
            <person name="Bult C."/>
            <person name="Grimmond S.M."/>
            <person name="Teasdale R.D."/>
            <person name="Liu E.T."/>
            <person name="Brusic V."/>
            <person name="Quackenbush J."/>
            <person name="Wahlestedt C."/>
            <person name="Mattick J.S."/>
            <person name="Hume D.A."/>
            <person name="Kai C."/>
            <person name="Sasaki D."/>
            <person name="Tomaru Y."/>
            <person name="Fukuda S."/>
            <person name="Kanamori-Katayama M."/>
            <person name="Suzuki M."/>
            <person name="Aoki J."/>
            <person name="Arakawa T."/>
            <person name="Iida J."/>
            <person name="Imamura K."/>
            <person name="Itoh M."/>
            <person name="Kato T."/>
            <person name="Kawaji H."/>
            <person name="Kawagashira N."/>
            <person name="Kawashima T."/>
            <person name="Kojima M."/>
            <person name="Kondo S."/>
            <person name="Konno H."/>
            <person name="Nakano K."/>
            <person name="Ninomiya N."/>
            <person name="Nishio T."/>
            <person name="Okada M."/>
            <person name="Plessy C."/>
            <person name="Shibata K."/>
            <person name="Shiraki T."/>
            <person name="Suzuki S."/>
            <person name="Tagami M."/>
            <person name="Waki K."/>
            <person name="Watahiki A."/>
            <person name="Okamura-Oho Y."/>
            <person name="Suzuki H."/>
            <person name="Kawai J."/>
            <person name="Hayashizaki Y."/>
        </authorList>
    </citation>
    <scope>NUCLEOTIDE SEQUENCE [LARGE SCALE MRNA] (ISOFORMS 2 AND 4)</scope>
    <scope>NUCLEOTIDE SEQUENCE [LARGE SCALE MRNA] OF 1-392 (ISOFORM 3)</scope>
    <scope>NUCLEOTIDE SEQUENCE [LARGE SCALE MRNA] OF 535-927 (ISOFORM 1)</scope>
    <source>
        <strain>C57BL/6J</strain>
        <tissue>Cerebellum</tissue>
        <tissue>Pancreas</tissue>
        <tissue>Retina</tissue>
    </source>
</reference>
<reference key="3">
    <citation type="journal article" date="2004" name="Genome Res.">
        <title>The status, quality, and expansion of the NIH full-length cDNA project: the Mammalian Gene Collection (MGC).</title>
        <authorList>
            <consortium name="The MGC Project Team"/>
        </authorList>
    </citation>
    <scope>NUCLEOTIDE SEQUENCE [LARGE SCALE MRNA] OF 478-927 (ISOFORM 1)</scope>
    <source>
        <strain>C57BL/6J</strain>
        <tissue>Eye</tissue>
    </source>
</reference>
<reference key="4">
    <citation type="journal article" date="2013" name="N. Engl. J. Med.">
        <title>Mutations in DSTYK and dominant urinary tract malformations.</title>
        <authorList>
            <person name="Sanna-Cherchi S."/>
            <person name="Sampogna R.V."/>
            <person name="Papeta N."/>
            <person name="Burgess K.E."/>
            <person name="Nees S.N."/>
            <person name="Perry B.J."/>
            <person name="Choi M."/>
            <person name="Bodria M."/>
            <person name="Liu Y."/>
            <person name="Weng P.L."/>
            <person name="Lozanovski V.J."/>
            <person name="Verbitsky M."/>
            <person name="Lugani F."/>
            <person name="Sterken R."/>
            <person name="Paragas N."/>
            <person name="Caridi G."/>
            <person name="Carrea A."/>
            <person name="Dagnino M."/>
            <person name="Materna-Kiryluk A."/>
            <person name="Santamaria G."/>
            <person name="Murtas C."/>
            <person name="Ristoska-Bojkovska N."/>
            <person name="Izzi C."/>
            <person name="Kacak N."/>
            <person name="Bianco B."/>
            <person name="Giberti S."/>
            <person name="Gigante M."/>
            <person name="Piaggio G."/>
            <person name="Gesualdo L."/>
            <person name="Kosuljandic Vukic D."/>
            <person name="Vukojevic K."/>
            <person name="Saraga-Babic M."/>
            <person name="Saraga M."/>
            <person name="Gucev Z."/>
            <person name="Allegri L."/>
            <person name="Latos-Bielenska A."/>
            <person name="Casu D."/>
            <person name="State M."/>
            <person name="Scolari F."/>
            <person name="Ravazzolo R."/>
            <person name="Kiryluk K."/>
            <person name="Al-Awqati Q."/>
            <person name="D'Agati V.D."/>
            <person name="Drummond I.A."/>
            <person name="Tasic V."/>
            <person name="Lifton R.P."/>
            <person name="Ghiggeri G.M."/>
            <person name="Gharavi A.G."/>
        </authorList>
    </citation>
    <scope>SUBCELLULAR LOCATION</scope>
    <scope>TISSUE SPECIFICITY</scope>
</reference>
<gene>
    <name type="primary">Dstyk</name>
    <name type="synonym">Ripk5</name>
</gene>
<name>DUSTY_MOUSE</name>
<sequence length="927" mass="104901">MEADGQSWAGESVSGPGPGGGGMIRELCRGFSRYRRYLGRLRQNLRETQKFFRDIKCSHSHSCPSSPAGGGAAELGPAGDVAEAPLPAGQLSCISFPPMEETYLQQLVDRLPCILILGQDCNAKCQLLNLLLGVQVLPTLKLDSDESCKLRRLRFTYGTRTRVSLALPGQYELVHTLASHQDNWETIPEEDLEVQEDSEDAAHVLADLEVTMHHALLQEVDIVVAPCPSHRPSVDVLSDLANDFLPVITYALHKDELSERGEQELREVRQYFSFPMFFFKVPKLEIISSSSGRAESERSPLYGQLVDLGYLSSSHRNCVPSDQDCKAQSMLVEQSEKLKQLSTFSHQLLQNRLVDAAKALNVVHSHCLDIFINQAFDMQRDLQITPKRLEYTRKKENELYESLMNIANRKQEEMKDMIVETLNTMKEELLDDAANMEFKDVIVPENGETIGTREIKSCIRQIQELIISRLNQAVANKLISSVDYLRESFVGTLERCLQSLEKSQDVSVHITSNYLKQILNAAYHVEVTFHSGSSVTRMLWEQIKQIIQRITWVNPPTITLEWKRKVAQEAIDSLSASKLAKSICSQFRTRLNSSHEAFAASLRQLEAGHSGRLEKTEDLWLKVRKDHAPRLARLSLESRSLQDVLLHRKPKLGQELGRGQYGVVYLCDNWGGHFPCALKSVVPPDEKHWNDLALEFHYMRSLPKHERLVDLHGSVIDYNYGGGSSVAVLLIMERLHRDLYTGLKAGLTLETRLQIALDVVEGIRFLHSQGLVHRDIKLKNVLLDKQNRAKITDLGFCKPEAMMSGSIVGTPIHMAPELFTGKYDNSVDVYAFGILFWYICSGSIKLPEAFERCASKDHLWNNVRRGTRPERLPVFDEECWQLMEACWDGDPLKRPLLGIVQPMLRSIMDRLCKCSSEQPNRGLDDST</sequence>
<dbReference type="EC" id="2.7.12.1"/>
<dbReference type="EMBL" id="AY208852">
    <property type="protein sequence ID" value="AAP42420.1"/>
    <property type="molecule type" value="mRNA"/>
</dbReference>
<dbReference type="EMBL" id="AY429676">
    <property type="protein sequence ID" value="AAS55392.1"/>
    <property type="molecule type" value="mRNA"/>
</dbReference>
<dbReference type="EMBL" id="AK020880">
    <property type="protein sequence ID" value="BAB32238.1"/>
    <property type="molecule type" value="mRNA"/>
</dbReference>
<dbReference type="EMBL" id="AK043199">
    <property type="protein sequence ID" value="BAC31487.1"/>
    <property type="molecule type" value="mRNA"/>
</dbReference>
<dbReference type="EMBL" id="AK050542">
    <property type="protein sequence ID" value="BAC34316.1"/>
    <property type="status" value="ALT_INIT"/>
    <property type="molecule type" value="mRNA"/>
</dbReference>
<dbReference type="EMBL" id="AK145449">
    <property type="protein sequence ID" value="BAE26444.1"/>
    <property type="status" value="ALT_INIT"/>
    <property type="molecule type" value="mRNA"/>
</dbReference>
<dbReference type="EMBL" id="BC089380">
    <property type="protein sequence ID" value="AAH89380.1"/>
    <property type="molecule type" value="mRNA"/>
</dbReference>
<dbReference type="CCDS" id="CCDS15285.1">
    <molecule id="Q6XUX1-1"/>
</dbReference>
<dbReference type="RefSeq" id="NP_766104.2">
    <molecule id="Q6XUX1-1"/>
    <property type="nucleotide sequence ID" value="NM_172516.4"/>
</dbReference>
<dbReference type="SMR" id="Q6XUX1"/>
<dbReference type="BioGRID" id="229434">
    <property type="interactions" value="2"/>
</dbReference>
<dbReference type="FunCoup" id="Q6XUX1">
    <property type="interactions" value="1050"/>
</dbReference>
<dbReference type="IntAct" id="Q6XUX1">
    <property type="interactions" value="2"/>
</dbReference>
<dbReference type="STRING" id="10090.ENSMUSP00000035358"/>
<dbReference type="GlyGen" id="Q6XUX1">
    <property type="glycosylation" value="1 site, 1 N-linked glycan (1 site)"/>
</dbReference>
<dbReference type="iPTMnet" id="Q6XUX1"/>
<dbReference type="PhosphoSitePlus" id="Q6XUX1"/>
<dbReference type="PaxDb" id="10090-ENSMUSP00000035358"/>
<dbReference type="ProteomicsDB" id="279489">
    <molecule id="Q6XUX1-1"/>
</dbReference>
<dbReference type="ProteomicsDB" id="279490">
    <molecule id="Q6XUX1-2"/>
</dbReference>
<dbReference type="ProteomicsDB" id="279491">
    <molecule id="Q6XUX1-3"/>
</dbReference>
<dbReference type="ProteomicsDB" id="279492">
    <molecule id="Q6XUX1-4"/>
</dbReference>
<dbReference type="Pumba" id="Q6XUX1"/>
<dbReference type="Antibodypedia" id="34564">
    <property type="antibodies" value="193 antibodies from 26 providers"/>
</dbReference>
<dbReference type="DNASU" id="213452"/>
<dbReference type="Ensembl" id="ENSMUST00000045110.14">
    <molecule id="Q6XUX1-1"/>
    <property type="protein sequence ID" value="ENSMUSP00000035358.8"/>
    <property type="gene ID" value="ENSMUSG00000042046.16"/>
</dbReference>
<dbReference type="GeneID" id="213452"/>
<dbReference type="KEGG" id="mmu:213452"/>
<dbReference type="UCSC" id="uc007cou.1">
    <molecule id="Q6XUX1-1"/>
    <property type="organism name" value="mouse"/>
</dbReference>
<dbReference type="UCSC" id="uc007cov.1">
    <molecule id="Q6XUX1-4"/>
    <property type="organism name" value="mouse"/>
</dbReference>
<dbReference type="AGR" id="MGI:1925064"/>
<dbReference type="CTD" id="25778"/>
<dbReference type="MGI" id="MGI:1925064">
    <property type="gene designation" value="Dstyk"/>
</dbReference>
<dbReference type="VEuPathDB" id="HostDB:ENSMUSG00000042046"/>
<dbReference type="eggNOG" id="KOG0192">
    <property type="taxonomic scope" value="Eukaryota"/>
</dbReference>
<dbReference type="GeneTree" id="ENSGT00840000129948"/>
<dbReference type="HOGENOM" id="CLU_014116_0_0_1"/>
<dbReference type="InParanoid" id="Q6XUX1"/>
<dbReference type="OMA" id="VTRMVWE"/>
<dbReference type="OrthoDB" id="122279at2759"/>
<dbReference type="PhylomeDB" id="Q6XUX1"/>
<dbReference type="TreeFam" id="TF331821"/>
<dbReference type="BioGRID-ORCS" id="213452">
    <property type="hits" value="3 hits in 79 CRISPR screens"/>
</dbReference>
<dbReference type="ChiTaRS" id="Dstyk">
    <property type="organism name" value="mouse"/>
</dbReference>
<dbReference type="PRO" id="PR:Q6XUX1"/>
<dbReference type="Proteomes" id="UP000000589">
    <property type="component" value="Chromosome 1"/>
</dbReference>
<dbReference type="RNAct" id="Q6XUX1">
    <property type="molecule type" value="protein"/>
</dbReference>
<dbReference type="Bgee" id="ENSMUSG00000042046">
    <property type="expression patterns" value="Expressed in ciliary body and 248 other cell types or tissues"/>
</dbReference>
<dbReference type="ExpressionAtlas" id="Q6XUX1">
    <property type="expression patterns" value="baseline and differential"/>
</dbReference>
<dbReference type="GO" id="GO:0070161">
    <property type="term" value="C:anchoring junction"/>
    <property type="evidence" value="ECO:0007669"/>
    <property type="project" value="UniProtKB-SubCell"/>
</dbReference>
<dbReference type="GO" id="GO:0016324">
    <property type="term" value="C:apical plasma membrane"/>
    <property type="evidence" value="ECO:0000314"/>
    <property type="project" value="UniProtKB"/>
</dbReference>
<dbReference type="GO" id="GO:0016323">
    <property type="term" value="C:basolateral plasma membrane"/>
    <property type="evidence" value="ECO:0000314"/>
    <property type="project" value="UniProtKB"/>
</dbReference>
<dbReference type="GO" id="GO:0005737">
    <property type="term" value="C:cytoplasm"/>
    <property type="evidence" value="ECO:0000314"/>
    <property type="project" value="UniProtKB"/>
</dbReference>
<dbReference type="GO" id="GO:0005524">
    <property type="term" value="F:ATP binding"/>
    <property type="evidence" value="ECO:0007669"/>
    <property type="project" value="UniProtKB-KW"/>
</dbReference>
<dbReference type="GO" id="GO:0106310">
    <property type="term" value="F:protein serine kinase activity"/>
    <property type="evidence" value="ECO:0007669"/>
    <property type="project" value="RHEA"/>
</dbReference>
<dbReference type="GO" id="GO:0004674">
    <property type="term" value="F:protein serine/threonine kinase activity"/>
    <property type="evidence" value="ECO:0007669"/>
    <property type="project" value="UniProtKB-KW"/>
</dbReference>
<dbReference type="GO" id="GO:0004712">
    <property type="term" value="F:protein serine/threonine/tyrosine kinase activity"/>
    <property type="evidence" value="ECO:0007669"/>
    <property type="project" value="UniProtKB-EC"/>
</dbReference>
<dbReference type="GO" id="GO:0004713">
    <property type="term" value="F:protein tyrosine kinase activity"/>
    <property type="evidence" value="ECO:0007669"/>
    <property type="project" value="UniProtKB-KW"/>
</dbReference>
<dbReference type="GO" id="GO:0044344">
    <property type="term" value="P:cellular response to fibroblast growth factor stimulus"/>
    <property type="evidence" value="ECO:0000250"/>
    <property type="project" value="UniProtKB"/>
</dbReference>
<dbReference type="GO" id="GO:0043066">
    <property type="term" value="P:negative regulation of apoptotic process"/>
    <property type="evidence" value="ECO:0000250"/>
    <property type="project" value="UniProtKB"/>
</dbReference>
<dbReference type="GO" id="GO:0070374">
    <property type="term" value="P:positive regulation of ERK1 and ERK2 cascade"/>
    <property type="evidence" value="ECO:0000250"/>
    <property type="project" value="UniProtKB"/>
</dbReference>
<dbReference type="GO" id="GO:0045743">
    <property type="term" value="P:positive regulation of fibroblast growth factor receptor signaling pathway"/>
    <property type="evidence" value="ECO:0000250"/>
    <property type="project" value="UniProtKB"/>
</dbReference>
<dbReference type="GO" id="GO:0033674">
    <property type="term" value="P:positive regulation of kinase activity"/>
    <property type="evidence" value="ECO:0000250"/>
    <property type="project" value="UniProtKB"/>
</dbReference>
<dbReference type="CDD" id="cd13975">
    <property type="entry name" value="PKc_Dusty"/>
    <property type="match status" value="1"/>
</dbReference>
<dbReference type="FunFam" id="1.10.510.10:FF:000244">
    <property type="entry name" value="Dual serine/threonine and tyrosine protein kinase"/>
    <property type="match status" value="1"/>
</dbReference>
<dbReference type="Gene3D" id="1.10.510.10">
    <property type="entry name" value="Transferase(Phosphotransferase) domain 1"/>
    <property type="match status" value="1"/>
</dbReference>
<dbReference type="InterPro" id="IPR051302">
    <property type="entry name" value="Dual_SerThr-Tyr_Kinase"/>
</dbReference>
<dbReference type="InterPro" id="IPR011009">
    <property type="entry name" value="Kinase-like_dom_sf"/>
</dbReference>
<dbReference type="InterPro" id="IPR000719">
    <property type="entry name" value="Prot_kinase_dom"/>
</dbReference>
<dbReference type="InterPro" id="IPR017441">
    <property type="entry name" value="Protein_kinase_ATP_BS"/>
</dbReference>
<dbReference type="InterPro" id="IPR008271">
    <property type="entry name" value="Ser/Thr_kinase_AS"/>
</dbReference>
<dbReference type="PANTHER" id="PTHR46392">
    <property type="entry name" value="DUAL SERINE/THREONINE AND TYROSINE PROTEIN KINASE"/>
    <property type="match status" value="1"/>
</dbReference>
<dbReference type="PANTHER" id="PTHR46392:SF1">
    <property type="entry name" value="DUAL SERINE_THREONINE AND TYROSINE PROTEIN KINASE"/>
    <property type="match status" value="1"/>
</dbReference>
<dbReference type="Pfam" id="PF00069">
    <property type="entry name" value="Pkinase"/>
    <property type="match status" value="1"/>
</dbReference>
<dbReference type="SMART" id="SM00220">
    <property type="entry name" value="S_TKc"/>
    <property type="match status" value="1"/>
</dbReference>
<dbReference type="SUPFAM" id="SSF56112">
    <property type="entry name" value="Protein kinase-like (PK-like)"/>
    <property type="match status" value="1"/>
</dbReference>
<dbReference type="PROSITE" id="PS00107">
    <property type="entry name" value="PROTEIN_KINASE_ATP"/>
    <property type="match status" value="1"/>
</dbReference>
<dbReference type="PROSITE" id="PS50011">
    <property type="entry name" value="PROTEIN_KINASE_DOM"/>
    <property type="match status" value="1"/>
</dbReference>
<dbReference type="PROSITE" id="PS00108">
    <property type="entry name" value="PROTEIN_KINASE_ST"/>
    <property type="match status" value="1"/>
</dbReference>
<keyword id="KW-0025">Alternative splicing</keyword>
<keyword id="KW-0067">ATP-binding</keyword>
<keyword id="KW-0965">Cell junction</keyword>
<keyword id="KW-1003">Cell membrane</keyword>
<keyword id="KW-0175">Coiled coil</keyword>
<keyword id="KW-0963">Cytoplasm</keyword>
<keyword id="KW-0418">Kinase</keyword>
<keyword id="KW-0472">Membrane</keyword>
<keyword id="KW-0547">Nucleotide-binding</keyword>
<keyword id="KW-1185">Reference proteome</keyword>
<keyword id="KW-0723">Serine/threonine-protein kinase</keyword>
<keyword id="KW-0808">Transferase</keyword>
<keyword id="KW-0829">Tyrosine-protein kinase</keyword>
<organism>
    <name type="scientific">Mus musculus</name>
    <name type="common">Mouse</name>
    <dbReference type="NCBI Taxonomy" id="10090"/>
    <lineage>
        <taxon>Eukaryota</taxon>
        <taxon>Metazoa</taxon>
        <taxon>Chordata</taxon>
        <taxon>Craniata</taxon>
        <taxon>Vertebrata</taxon>
        <taxon>Euteleostomi</taxon>
        <taxon>Mammalia</taxon>
        <taxon>Eutheria</taxon>
        <taxon>Euarchontoglires</taxon>
        <taxon>Glires</taxon>
        <taxon>Rodentia</taxon>
        <taxon>Myomorpha</taxon>
        <taxon>Muroidea</taxon>
        <taxon>Muridae</taxon>
        <taxon>Murinae</taxon>
        <taxon>Mus</taxon>
        <taxon>Mus</taxon>
    </lineage>
</organism>
<protein>
    <recommendedName>
        <fullName>Dual serine/threonine and tyrosine protein kinase</fullName>
        <ecNumber>2.7.12.1</ecNumber>
    </recommendedName>
    <alternativeName>
        <fullName>Dusty protein kinase</fullName>
        <shortName>Dusty PK</shortName>
    </alternativeName>
    <alternativeName>
        <fullName>Receptor-interacting serine/threonine-protein kinase 5</fullName>
    </alternativeName>
</protein>
<feature type="chain" id="PRO_0000233119" description="Dual serine/threonine and tyrosine protein kinase">
    <location>
        <begin position="1"/>
        <end position="927"/>
    </location>
</feature>
<feature type="domain" description="Protein kinase" evidence="3">
    <location>
        <begin position="650"/>
        <end position="904"/>
    </location>
</feature>
<feature type="region of interest" description="Disordered" evidence="5">
    <location>
        <begin position="1"/>
        <end position="21"/>
    </location>
</feature>
<feature type="coiled-coil region" evidence="2">
    <location>
        <begin position="393"/>
        <end position="429"/>
    </location>
</feature>
<feature type="active site" description="Proton acceptor" evidence="3 4">
    <location>
        <position position="775"/>
    </location>
</feature>
<feature type="binding site" evidence="3">
    <location>
        <begin position="656"/>
        <end position="664"/>
    </location>
    <ligand>
        <name>ATP</name>
        <dbReference type="ChEBI" id="CHEBI:30616"/>
    </ligand>
</feature>
<feature type="binding site" evidence="3">
    <location>
        <position position="679"/>
    </location>
    <ligand>
        <name>ATP</name>
        <dbReference type="ChEBI" id="CHEBI:30616"/>
    </ligand>
</feature>
<feature type="splice variant" id="VSP_018037" description="In isoform 4." evidence="8">
    <location>
        <begin position="1"/>
        <end position="536"/>
    </location>
</feature>
<feature type="splice variant" id="VSP_018036" description="In isoform 3." evidence="8">
    <location>
        <begin position="210"/>
        <end position="218"/>
    </location>
</feature>
<feature type="splice variant" id="VSP_018038" description="In isoform 4." evidence="8">
    <original>RMLWEQIK</original>
    <variation>MISLSSSW</variation>
    <location>
        <begin position="537"/>
        <end position="544"/>
    </location>
</feature>
<feature type="splice variant" id="VSP_018039" description="In isoform 4." evidence="8">
    <location>
        <begin position="701"/>
        <end position="927"/>
    </location>
</feature>
<feature type="splice variant" id="VSP_018035" description="In isoform 2." evidence="8">
    <location>
        <begin position="923"/>
        <end position="927"/>
    </location>
</feature>
<feature type="sequence conflict" description="In Ref. 2; BAC31487." evidence="9" ref="2">
    <original>E</original>
    <variation>K</variation>
    <location>
        <position position="695"/>
    </location>
</feature>